<keyword id="KW-0007">Acetylation</keyword>
<keyword id="KW-0067">ATP-binding</keyword>
<keyword id="KW-0131">Cell cycle</keyword>
<keyword id="KW-0132">Cell division</keyword>
<keyword id="KW-0158">Chromosome</keyword>
<keyword id="KW-0175">Coiled coil</keyword>
<keyword id="KW-0963">Cytoplasm</keyword>
<keyword id="KW-0226">DNA condensation</keyword>
<keyword id="KW-0498">Mitosis</keyword>
<keyword id="KW-0547">Nucleotide-binding</keyword>
<keyword id="KW-0539">Nucleus</keyword>
<keyword id="KW-0597">Phosphoprotein</keyword>
<comment type="function">
    <text evidence="1">Central component of the condensin complex, a complex required for conversion of interphase chromatin into mitotic-like condense chromosomes. The condensin complex probably introduces positive supercoils into relaxed DNA in the presence of type I topoisomerases and converts nicked DNA into positive knotted forms in the presence of type II topoisomerases (By similarity).</text>
</comment>
<comment type="subunit">
    <text evidence="1">Forms a heterodimer with SMC2. Component of the condensin complex, which contains the SMC2 and SMC4 heterodimer, and three non SMC subunits that probably regulate the complex: BRRN1/CAPH, CNAP1/CAPD2 and CAPG (By similarity).</text>
</comment>
<comment type="subcellular location">
    <subcellularLocation>
        <location evidence="1">Nucleus</location>
    </subcellularLocation>
    <subcellularLocation>
        <location evidence="1">Cytoplasm</location>
    </subcellularLocation>
    <subcellularLocation>
        <location evidence="1">Chromosome</location>
    </subcellularLocation>
    <text evidence="1">In interphase cells, the majority of the condensin complex is found in the cytoplasm, while a minority of the complex is associated with chromatin. A subpopulation of the complex however remains associated with chromosome foci in interphase cells. During mitosis, most of the condensin complex is associated with the chromatin. At the onset of prophase, the regulatory subunits of the complex are phosphorylated by CDC2, leading to condensin's association with chromosome arms and to chromosome condensation. Dissociation from chromosomes is observed in late telophase (By similarity).</text>
</comment>
<comment type="domain">
    <text evidence="1">The SMC hinge domain, which separates the large intramolecular coiled coil regions, allows the heterodimerization with SMC2, forming a V-shaped heterodimer.</text>
</comment>
<comment type="similarity">
    <text evidence="6">Belongs to the SMC family. SMC4 subfamily.</text>
</comment>
<proteinExistence type="evidence at transcript level"/>
<reference key="1">
    <citation type="submission" date="2000-09" db="EMBL/GenBank/DDBJ databases">
        <title>SMC genes from common vole Microtus arvalis.</title>
        <authorList>
            <person name="Pavlova S.V."/>
            <person name="Nesterova T.B."/>
            <person name="Zakian S.M."/>
        </authorList>
    </citation>
    <scope>NUCLEOTIDE SEQUENCE [GENOMIC DNA / MRNA]</scope>
</reference>
<protein>
    <recommendedName>
        <fullName>Structural maintenance of chromosomes protein 4</fullName>
        <shortName>SMC protein 4</shortName>
        <shortName>SMC-4</shortName>
    </recommendedName>
    <alternativeName>
        <fullName>Chromosome-associated polypeptide C</fullName>
    </alternativeName>
    <alternativeName>
        <fullName>XCAP-C homolog</fullName>
    </alternativeName>
</protein>
<dbReference type="EMBL" id="AJ299713">
    <property type="protein sequence ID" value="CAC09583.1"/>
    <property type="molecule type" value="mRNA"/>
</dbReference>
<dbReference type="EMBL" id="AJ299717">
    <property type="protein sequence ID" value="CAC09587.1"/>
    <property type="molecule type" value="Genomic_DNA"/>
</dbReference>
<dbReference type="SMR" id="Q9ERA5"/>
<dbReference type="GO" id="GO:0000796">
    <property type="term" value="C:condensin complex"/>
    <property type="evidence" value="ECO:0007669"/>
    <property type="project" value="TreeGrafter"/>
</dbReference>
<dbReference type="GO" id="GO:0005737">
    <property type="term" value="C:cytoplasm"/>
    <property type="evidence" value="ECO:0007669"/>
    <property type="project" value="UniProtKB-SubCell"/>
</dbReference>
<dbReference type="GO" id="GO:0031981">
    <property type="term" value="C:nuclear lumen"/>
    <property type="evidence" value="ECO:0007669"/>
    <property type="project" value="UniProtKB-ARBA"/>
</dbReference>
<dbReference type="GO" id="GO:0005524">
    <property type="term" value="F:ATP binding"/>
    <property type="evidence" value="ECO:0007669"/>
    <property type="project" value="UniProtKB-KW"/>
</dbReference>
<dbReference type="GO" id="GO:0016887">
    <property type="term" value="F:ATP hydrolysis activity"/>
    <property type="evidence" value="ECO:0007669"/>
    <property type="project" value="InterPro"/>
</dbReference>
<dbReference type="GO" id="GO:0051301">
    <property type="term" value="P:cell division"/>
    <property type="evidence" value="ECO:0007669"/>
    <property type="project" value="UniProtKB-KW"/>
</dbReference>
<dbReference type="GO" id="GO:0051321">
    <property type="term" value="P:meiotic cell cycle"/>
    <property type="evidence" value="ECO:0007669"/>
    <property type="project" value="UniProtKB-ARBA"/>
</dbReference>
<dbReference type="GO" id="GO:0007076">
    <property type="term" value="P:mitotic chromosome condensation"/>
    <property type="evidence" value="ECO:0000250"/>
    <property type="project" value="UniProtKB"/>
</dbReference>
<dbReference type="FunFam" id="1.20.1060.20:FF:000003">
    <property type="entry name" value="Structural maintenance of chromosomes 4"/>
    <property type="match status" value="1"/>
</dbReference>
<dbReference type="FunFam" id="3.30.70.1620:FF:000003">
    <property type="entry name" value="Structural maintenance of chromosomes 4"/>
    <property type="match status" value="1"/>
</dbReference>
<dbReference type="FunFam" id="3.40.50.300:FF:000481">
    <property type="entry name" value="Structural maintenance of chromosomes 4"/>
    <property type="match status" value="1"/>
</dbReference>
<dbReference type="FunFam" id="3.40.50.300:FF:000585">
    <property type="entry name" value="Structural maintenance of chromosomes 4"/>
    <property type="match status" value="1"/>
</dbReference>
<dbReference type="Gene3D" id="1.20.1060.20">
    <property type="match status" value="1"/>
</dbReference>
<dbReference type="Gene3D" id="3.30.70.1620">
    <property type="match status" value="1"/>
</dbReference>
<dbReference type="Gene3D" id="3.40.50.300">
    <property type="entry name" value="P-loop containing nucleotide triphosphate hydrolases"/>
    <property type="match status" value="2"/>
</dbReference>
<dbReference type="InterPro" id="IPR027417">
    <property type="entry name" value="P-loop_NTPase"/>
</dbReference>
<dbReference type="InterPro" id="IPR003395">
    <property type="entry name" value="RecF/RecN/SMC_N"/>
</dbReference>
<dbReference type="InterPro" id="IPR024704">
    <property type="entry name" value="SMC"/>
</dbReference>
<dbReference type="InterPro" id="IPR010935">
    <property type="entry name" value="SMC_hinge"/>
</dbReference>
<dbReference type="InterPro" id="IPR036277">
    <property type="entry name" value="SMC_hinge_sf"/>
</dbReference>
<dbReference type="PANTHER" id="PTHR18937:SF172">
    <property type="entry name" value="STRUCTURAL MAINTENANCE OF CHROMOSOMES PROTEIN"/>
    <property type="match status" value="1"/>
</dbReference>
<dbReference type="PANTHER" id="PTHR18937">
    <property type="entry name" value="STRUCTURAL MAINTENANCE OF CHROMOSOMES SMC FAMILY MEMBER"/>
    <property type="match status" value="1"/>
</dbReference>
<dbReference type="Pfam" id="PF06470">
    <property type="entry name" value="SMC_hinge"/>
    <property type="match status" value="1"/>
</dbReference>
<dbReference type="Pfam" id="PF02463">
    <property type="entry name" value="SMC_N"/>
    <property type="match status" value="1"/>
</dbReference>
<dbReference type="PIRSF" id="PIRSF005719">
    <property type="entry name" value="SMC"/>
    <property type="match status" value="1"/>
</dbReference>
<dbReference type="SMART" id="SM00968">
    <property type="entry name" value="SMC_hinge"/>
    <property type="match status" value="1"/>
</dbReference>
<dbReference type="SUPFAM" id="SSF52540">
    <property type="entry name" value="P-loop containing nucleoside triphosphate hydrolases"/>
    <property type="match status" value="1"/>
</dbReference>
<dbReference type="SUPFAM" id="SSF75553">
    <property type="entry name" value="Smc hinge domain"/>
    <property type="match status" value="1"/>
</dbReference>
<dbReference type="SUPFAM" id="SSF57997">
    <property type="entry name" value="Tropomyosin"/>
    <property type="match status" value="2"/>
</dbReference>
<gene>
    <name type="primary">SMC4</name>
    <name type="synonym">CAPC</name>
    <name type="synonym">SMC4L1</name>
</gene>
<accession>Q9ERA5</accession>
<accession>Q9ERA1</accession>
<organism>
    <name type="scientific">Microtus arvalis</name>
    <name type="common">Common vole</name>
    <name type="synonym">Field vole</name>
    <dbReference type="NCBI Taxonomy" id="47230"/>
    <lineage>
        <taxon>Eukaryota</taxon>
        <taxon>Metazoa</taxon>
        <taxon>Chordata</taxon>
        <taxon>Craniata</taxon>
        <taxon>Vertebrata</taxon>
        <taxon>Euteleostomi</taxon>
        <taxon>Mammalia</taxon>
        <taxon>Eutheria</taxon>
        <taxon>Euarchontoglires</taxon>
        <taxon>Glires</taxon>
        <taxon>Rodentia</taxon>
        <taxon>Myomorpha</taxon>
        <taxon>Muroidea</taxon>
        <taxon>Cricetidae</taxon>
        <taxon>Arvicolinae</taxon>
        <taxon>Microtus</taxon>
    </lineage>
</organism>
<sequence>LETPGEEVDNRSLEEILSSIPPPPPPAMASEAGAPRLMITHIVNQNFKSCAGEKILGPFHKRFSCIIGPNGSGKSNVIDSMLFVFGYRAQKIRSKKLSVLIHNSDEHKDIQSCTVEVHFQKIIDKEGDDYEVIPNSNFCVSRTAYRDNTSVYHISGKKRTFKDVGNLLRSHGIDLDHNRFLILQGEVEQIAMMKPKGQTEHDEGMLEYLEDIIGCGRLNEPIKVLCRRVEILNENRGEKLNRVKMVEKEKDAVEGEKNIAIEFLTLEKEMFKKKNHVCQYYIYDLQKRIDEMKTQKEKIHEDTKEITEKSNMLSNEMKAKNSAVKDIEKKLHKATKFIEENKEKFRQLDLEDVQVREKLKHATSKAKKLEKQLQKDKEKVEELKSIPAKSKTIINETTTKSSSLEKEKEKEEKKLKEVMDSLKQETQGLQKEKEDQEKELMGFNKSVNEARSKMEVAQSELDIYLSRHNTAVSQLSKAKETLITASETLKERKAAIGEINTKLPQTQQELKEKEKELQKLTQEEINLKSLVHDLFQKVEEAKSSLAMNRSRGKVLDAIIQEKKSGRIPGIYGRLGDLGAIDEKYDIAISSCCHALDYIVVDSIDTAQECVNFLKRHNIGVATFIGLDKMTVWAKKMAKIQTPENTPRLFDLVKAKNEEIRQAFYFALRDTLVADNLDQATRVAYQKDRRWRVVTLQGQIIEQSGTMTGGGSKVMRGRMGSSVIVEISEEEVNKMESQLQKHSKQARRIQEQKVQHEERVVKLRHSEREMRNTLEKFAASIQGLSDQEEYLTVQIKELEANVLTTAPDKKKQKLLEENVSAFKKEYDAVAEKAGKVEAEVKRLHDTIIEINNRKLKAQQNKLDMINKQLDECASAITKAQVAIKTADRNLIKAQDSVVRTEKEIKDTEKETNDLKAELKAIEDKAEEVIKKTNAAEESLPEIQKEHRNLLQELKVIQENEHALQKDALSIKLKLEQIDGHIAEHNSKIKYWQKEISKIKLHPIEDNPVETVSVLSPEDLEAIKNPDSITNQIAILEAQCHEMKPNLGAIAEYKKKEELYLQRVAELDKITSERDNFRQAYEDLRKQRLNEFMAGFYIITNKLKENYQMLTLGGDAELELVDSLDPFSEGIMFSVRPPKKSWKKIFNLSGGEKTLSSLALVFALHHYKPTPLYFMDEIDAALDFKNVSIVAFYIYEQTKNAQFIIISLRNNMFEISDRLIGIYKTYNITKSVAVNPKEIASKGLC</sequence>
<name>SMC4_MICAR</name>
<evidence type="ECO:0000250" key="1"/>
<evidence type="ECO:0000250" key="2">
    <source>
        <dbReference type="UniProtKB" id="Q8CG47"/>
    </source>
</evidence>
<evidence type="ECO:0000250" key="3">
    <source>
        <dbReference type="UniProtKB" id="Q9NTJ3"/>
    </source>
</evidence>
<evidence type="ECO:0000255" key="4"/>
<evidence type="ECO:0000256" key="5">
    <source>
        <dbReference type="SAM" id="MobiDB-lite"/>
    </source>
</evidence>
<evidence type="ECO:0000305" key="6"/>
<feature type="chain" id="PRO_0000119007" description="Structural maintenance of chromosomes protein 4">
    <location>
        <begin position="1" status="less than"/>
        <end position="1243"/>
    </location>
</feature>
<feature type="domain" description="SMC hinge">
    <location>
        <begin position="568"/>
        <end position="682"/>
    </location>
</feature>
<feature type="region of interest" description="Disordered" evidence="5">
    <location>
        <begin position="1"/>
        <end position="30"/>
    </location>
</feature>
<feature type="coiled-coil region" evidence="4">
    <location>
        <begin position="225"/>
        <end position="546"/>
    </location>
</feature>
<feature type="coiled-coil region" evidence="4">
    <location>
        <begin position="721"/>
        <end position="975"/>
    </location>
</feature>
<feature type="coiled-coil region" evidence="4">
    <location>
        <begin position="1062"/>
        <end position="1090"/>
    </location>
</feature>
<feature type="binding site" evidence="4">
    <location>
        <begin position="68"/>
        <end position="75"/>
    </location>
    <ligand>
        <name>ATP</name>
        <dbReference type="ChEBI" id="CHEBI:30616"/>
    </ligand>
</feature>
<feature type="modified residue" description="Phosphoserine" evidence="3">
    <location>
        <position position="98"/>
    </location>
</feature>
<feature type="modified residue" description="N6-acetyllysine" evidence="2">
    <location>
        <position position="336"/>
    </location>
</feature>
<feature type="modified residue" description="N6-acetyllysine" evidence="3">
    <location>
        <position position="634"/>
    </location>
</feature>
<feature type="modified residue" description="Phosphoserine" evidence="3">
    <location>
        <position position="937"/>
    </location>
</feature>
<feature type="modified residue" description="Phosphoserine" evidence="3">
    <location>
        <position position="1011"/>
    </location>
</feature>
<feature type="sequence conflict" description="In Ref. 1; CAC09587." evidence="6" ref="1">
    <original>N</original>
    <variation>K</variation>
    <location>
        <position position="241"/>
    </location>
</feature>
<feature type="sequence conflict" description="In Ref. 1; CAC09587." evidence="6" ref="1">
    <original>E</original>
    <variation>R</variation>
    <location>
        <position position="757"/>
    </location>
</feature>
<feature type="non-terminal residue">
    <location>
        <position position="1"/>
    </location>
</feature>